<sequence length="233" mass="26109">MLCSIEKIEPLTSFIFRVLLKPDQPFEFRAGQYINVSLSFGSLPFSIASCPSNGAFLELHIGGSDISKKNTLVMEELTNSWGCGNMVEVSEARGKAWLRDESVKPLLLVAGGTGMSYTLSILKNSLAQGFNQPIYVYWGAKDMENLYVHDELVDIALENKNVSYVPVTEISTCPQYAKQGKVLECVMSDFRNLSEFDIYLCGPYKMVEVARDWFCDKRGAEPEQLYADAFAYL</sequence>
<proteinExistence type="inferred from homology"/>
<evidence type="ECO:0000250" key="1"/>
<evidence type="ECO:0000255" key="2">
    <source>
        <dbReference type="PROSITE-ProRule" id="PRU00716"/>
    </source>
</evidence>
<evidence type="ECO:0000305" key="3"/>
<keyword id="KW-0274">FAD</keyword>
<keyword id="KW-0285">Flavoprotein</keyword>
<keyword id="KW-0455">Luminescence</keyword>
<keyword id="KW-0560">Oxidoreductase</keyword>
<gene>
    <name type="primary">luxG</name>
</gene>
<organism>
    <name type="scientific">Vibrio harveyi</name>
    <name type="common">Beneckea harveyi</name>
    <dbReference type="NCBI Taxonomy" id="669"/>
    <lineage>
        <taxon>Bacteria</taxon>
        <taxon>Pseudomonadati</taxon>
        <taxon>Pseudomonadota</taxon>
        <taxon>Gammaproteobacteria</taxon>
        <taxon>Vibrionales</taxon>
        <taxon>Vibrionaceae</taxon>
        <taxon>Vibrio</taxon>
    </lineage>
</organism>
<comment type="function">
    <text>Probable flavin reductase in the luminescent systems of different marine bacteria.</text>
</comment>
<comment type="similarity">
    <text evidence="3">Belongs to the Fre/LuxG FAD/NAD(P) flavoprotein oxidoreductase family.</text>
</comment>
<reference key="1">
    <citation type="journal article" date="1990" name="J. Biol. Chem.">
        <title>Delineation of the transcriptional boundaries of the lux operon of Vibrio harveyi demonstrates the presence of two new lux genes.</title>
        <authorList>
            <person name="Swartzman E."/>
            <person name="Miyamoto C."/>
            <person name="Graham A."/>
            <person name="Meighen E."/>
        </authorList>
    </citation>
    <scope>NUCLEOTIDE SEQUENCE [GENOMIC DNA]</scope>
</reference>
<reference key="2">
    <citation type="journal article" date="1989" name="Biochem. Biophys. Res. Commun.">
        <title>The nucleotide sequence of the luxE gene of Vibrio harveyi and a comparison of the amino acid sequences of the acyl-protein synthetases from V. harveyi and V. fischeri.</title>
        <authorList>
            <person name="Johnston T.C."/>
            <person name="Hruska K.S."/>
            <person name="Adams L.F."/>
        </authorList>
    </citation>
    <scope>NUCLEOTIDE SEQUENCE [GENOMIC DNA] OF 1-29</scope>
</reference>
<feature type="chain" id="PRO_0000068143" description="Probable flavin reductase">
    <location>
        <begin position="1"/>
        <end position="233"/>
    </location>
</feature>
<feature type="domain" description="FAD-binding FR-type" evidence="2">
    <location>
        <begin position="1"/>
        <end position="133"/>
    </location>
</feature>
<feature type="binding site" evidence="1">
    <location>
        <begin position="111"/>
        <end position="115"/>
    </location>
    <ligand>
        <name>pyridine</name>
        <dbReference type="ChEBI" id="CHEBI:16227"/>
    </ligand>
</feature>
<dbReference type="EC" id="1.-.-.-"/>
<dbReference type="EMBL" id="M27139">
    <property type="protein sequence ID" value="AAA27537.1"/>
    <property type="molecule type" value="Genomic_DNA"/>
</dbReference>
<dbReference type="EMBL" id="M28815">
    <property type="status" value="NOT_ANNOTATED_CDS"/>
    <property type="molecule type" value="Genomic_DNA"/>
</dbReference>
<dbReference type="PIR" id="B35081">
    <property type="entry name" value="B35081"/>
</dbReference>
<dbReference type="RefSeq" id="WP_050933764.1">
    <property type="nucleotide sequence ID" value="NZ_CP009468.1"/>
</dbReference>
<dbReference type="SMR" id="P16447"/>
<dbReference type="PATRIC" id="fig|669.65.peg.3624"/>
<dbReference type="GO" id="GO:0016491">
    <property type="term" value="F:oxidoreductase activity"/>
    <property type="evidence" value="ECO:0007669"/>
    <property type="project" value="UniProtKB-KW"/>
</dbReference>
<dbReference type="GO" id="GO:0008218">
    <property type="term" value="P:bioluminescence"/>
    <property type="evidence" value="ECO:0007669"/>
    <property type="project" value="UniProtKB-KW"/>
</dbReference>
<dbReference type="CDD" id="cd06189">
    <property type="entry name" value="flavin_oxioreductase"/>
    <property type="match status" value="1"/>
</dbReference>
<dbReference type="Gene3D" id="3.40.50.80">
    <property type="entry name" value="Nucleotide-binding domain of ferredoxin-NADP reductase (FNR) module"/>
    <property type="match status" value="1"/>
</dbReference>
<dbReference type="Gene3D" id="2.40.30.10">
    <property type="entry name" value="Translation factors"/>
    <property type="match status" value="1"/>
</dbReference>
<dbReference type="InterPro" id="IPR017927">
    <property type="entry name" value="FAD-bd_FR_type"/>
</dbReference>
<dbReference type="InterPro" id="IPR039261">
    <property type="entry name" value="FNR_nucleotide-bd"/>
</dbReference>
<dbReference type="InterPro" id="IPR050415">
    <property type="entry name" value="MRET"/>
</dbReference>
<dbReference type="InterPro" id="IPR001433">
    <property type="entry name" value="OxRdtase_FAD/NAD-bd"/>
</dbReference>
<dbReference type="InterPro" id="IPR017938">
    <property type="entry name" value="Riboflavin_synthase-like_b-brl"/>
</dbReference>
<dbReference type="NCBIfam" id="NF005963">
    <property type="entry name" value="PRK08051.1"/>
    <property type="match status" value="1"/>
</dbReference>
<dbReference type="PANTHER" id="PTHR47354:SF7">
    <property type="entry name" value="NAD(P)H-FLAVIN REDUCTASE"/>
    <property type="match status" value="1"/>
</dbReference>
<dbReference type="PANTHER" id="PTHR47354">
    <property type="entry name" value="NADH OXIDOREDUCTASE HCR"/>
    <property type="match status" value="1"/>
</dbReference>
<dbReference type="Pfam" id="PF00175">
    <property type="entry name" value="NAD_binding_1"/>
    <property type="match status" value="1"/>
</dbReference>
<dbReference type="PRINTS" id="PR00410">
    <property type="entry name" value="PHEHYDRXLASE"/>
</dbReference>
<dbReference type="SUPFAM" id="SSF52343">
    <property type="entry name" value="Ferredoxin reductase-like, C-terminal NADP-linked domain"/>
    <property type="match status" value="1"/>
</dbReference>
<dbReference type="SUPFAM" id="SSF63380">
    <property type="entry name" value="Riboflavin synthase domain-like"/>
    <property type="match status" value="1"/>
</dbReference>
<dbReference type="PROSITE" id="PS51384">
    <property type="entry name" value="FAD_FR"/>
    <property type="match status" value="1"/>
</dbReference>
<accession>P16447</accession>
<name>LUXG_VIBHA</name>
<protein>
    <recommendedName>
        <fullName>Probable flavin reductase</fullName>
        <ecNumber>1.-.-.-</ecNumber>
    </recommendedName>
</protein>